<accession>Q85Q96</accession>
<evidence type="ECO:0000250" key="1">
    <source>
        <dbReference type="UniProtKB" id="P00420"/>
    </source>
</evidence>
<evidence type="ECO:0000255" key="2"/>
<evidence type="ECO:0000305" key="3"/>
<protein>
    <recommendedName>
        <fullName>Cytochrome c oxidase subunit 3</fullName>
        <ecNumber>7.1.1.9</ecNumber>
    </recommendedName>
    <alternativeName>
        <fullName>Cytochrome c oxidase polypeptide III</fullName>
    </alternativeName>
    <alternativeName>
        <fullName>Cytochrome oxidase subunit 3</fullName>
    </alternativeName>
</protein>
<sequence>MTHLERSRHQQYPYHMVLPSPWPMLLSFALLSLTLSLGLTMHGYIGNMNLVYLALLVVTLTSVFWFRDVIAEATYLGDHTIAVRKGINLGFLLFVLSEVLIFAGLFWAYFHSAMSPDIVLGASWPPVGIQAVQPTELPLLNTIILLSSGATITYSHHALICRNRNKALSGLFITIWLIIIFVTCQYIEYTNAAFTISDGVYGSVFYAGTGLHFLHMVMLAVMLIICYWRMRTYQFTSTHHVGFETTILYCHVLDIIWLFLYIVFYWWGV</sequence>
<comment type="function">
    <text evidence="1">Component of the cytochrome c oxidase, the last enzyme in the mitochondrial electron transport chain which drives oxidative phosphorylation. The respiratory chain contains 3 multisubunit complexes succinate dehydrogenase (complex II, CII), ubiquinol-cytochrome c oxidoreductase (cytochrome b-c1 complex, complex III, CIII) and cytochrome c oxidase (complex IV, CIV), that cooperate to transfer electrons derived from NADH and succinate to molecular oxygen, creating an electrochemical gradient over the inner membrane that drives transmembrane transport and the ATP synthase. Cytochrome c oxidase is the component of the respiratory chain that catalyzes the reduction of oxygen to water. Electrons originating from reduced cytochrome c in the intermembrane space (IMS) are transferred via the dinuclear copper A center (CU(A)) of subunit 2 and heme A of subunit 1 to the active site in subunit 1, a binuclear center (BNC) formed by heme A3 and copper B (CU(B)). The BNC reduces molecular oxygen to 2 water molecules using 4 electrons from cytochrome c in the IMS and 4 protons from the mitochondrial matrix.</text>
</comment>
<comment type="catalytic activity">
    <reaction evidence="1">
        <text>4 Fe(II)-[cytochrome c] + O2 + 8 H(+)(in) = 4 Fe(III)-[cytochrome c] + 2 H2O + 4 H(+)(out)</text>
        <dbReference type="Rhea" id="RHEA:11436"/>
        <dbReference type="Rhea" id="RHEA-COMP:10350"/>
        <dbReference type="Rhea" id="RHEA-COMP:14399"/>
        <dbReference type="ChEBI" id="CHEBI:15377"/>
        <dbReference type="ChEBI" id="CHEBI:15378"/>
        <dbReference type="ChEBI" id="CHEBI:15379"/>
        <dbReference type="ChEBI" id="CHEBI:29033"/>
        <dbReference type="ChEBI" id="CHEBI:29034"/>
        <dbReference type="EC" id="7.1.1.9"/>
    </reaction>
    <physiologicalReaction direction="left-to-right" evidence="1">
        <dbReference type="Rhea" id="RHEA:11437"/>
    </physiologicalReaction>
</comment>
<comment type="subunit">
    <text evidence="1">Component of the cytochrome c oxidase (complex IV, CIV), a multisubunit enzyme composed of a catalytic core of 3 subunits and several supernumerary subunits. The complex exists as a monomer or a dimer and forms supercomplexes (SCs) in the inner mitochondrial membrane with ubiquinol-cytochrome c oxidoreductase (cytochrome b-c1 complex, complex III, CIII).</text>
</comment>
<comment type="subcellular location">
    <subcellularLocation>
        <location evidence="1">Mitochondrion inner membrane</location>
        <topology evidence="1">Multi-pass membrane protein</topology>
    </subcellularLocation>
</comment>
<comment type="similarity">
    <text evidence="3">Belongs to the cytochrome c oxidase subunit 3 family.</text>
</comment>
<dbReference type="EC" id="7.1.1.9"/>
<dbReference type="EMBL" id="AJ511533">
    <property type="protein sequence ID" value="CAD54427.1"/>
    <property type="molecule type" value="Genomic_DNA"/>
</dbReference>
<dbReference type="RefSeq" id="NP_818786.1">
    <property type="nucleotide sequence ID" value="NC_004691.1"/>
</dbReference>
<dbReference type="SMR" id="Q85Q96"/>
<dbReference type="FunCoup" id="Q85Q96">
    <property type="interactions" value="247"/>
</dbReference>
<dbReference type="STRING" id="284593.Q85Q96"/>
<dbReference type="EnsemblFungi" id="CaglfMp12-T">
    <property type="protein sequence ID" value="CaglfMp12-T-p1"/>
    <property type="gene ID" value="CaglfMp12"/>
</dbReference>
<dbReference type="GeneID" id="807011"/>
<dbReference type="KEGG" id="cgr:807011"/>
<dbReference type="CGD" id="CAL0139492">
    <property type="gene designation" value="COX3"/>
</dbReference>
<dbReference type="VEuPathDB" id="FungiDB:B1J91_Mp12"/>
<dbReference type="VEuPathDB" id="FungiDB:CaglfMp12"/>
<dbReference type="InParanoid" id="Q85Q96"/>
<dbReference type="GO" id="GO:0005743">
    <property type="term" value="C:mitochondrial inner membrane"/>
    <property type="evidence" value="ECO:0007669"/>
    <property type="project" value="UniProtKB-SubCell"/>
</dbReference>
<dbReference type="GO" id="GO:0045277">
    <property type="term" value="C:respiratory chain complex IV"/>
    <property type="evidence" value="ECO:0000266"/>
    <property type="project" value="CGD"/>
</dbReference>
<dbReference type="GO" id="GO:0004129">
    <property type="term" value="F:cytochrome-c oxidase activity"/>
    <property type="evidence" value="ECO:0007669"/>
    <property type="project" value="UniProtKB-EC"/>
</dbReference>
<dbReference type="GO" id="GO:0048039">
    <property type="term" value="F:ubiquinone binding"/>
    <property type="evidence" value="ECO:0007669"/>
    <property type="project" value="EnsemblFungi"/>
</dbReference>
<dbReference type="GO" id="GO:0006123">
    <property type="term" value="P:mitochondrial electron transport, cytochrome c to oxygen"/>
    <property type="evidence" value="ECO:0000266"/>
    <property type="project" value="CGD"/>
</dbReference>
<dbReference type="CDD" id="cd01665">
    <property type="entry name" value="Cyt_c_Oxidase_III"/>
    <property type="match status" value="1"/>
</dbReference>
<dbReference type="FunFam" id="1.10.287.70:FF:000082">
    <property type="entry name" value="Cytochrome c oxidase subunit 3"/>
    <property type="match status" value="1"/>
</dbReference>
<dbReference type="FunFam" id="1.20.120.80:FF:000002">
    <property type="entry name" value="Cytochrome c oxidase subunit 3"/>
    <property type="match status" value="1"/>
</dbReference>
<dbReference type="Gene3D" id="1.10.287.70">
    <property type="match status" value="1"/>
</dbReference>
<dbReference type="Gene3D" id="1.20.120.80">
    <property type="entry name" value="Cytochrome c oxidase, subunit III, four-helix bundle"/>
    <property type="match status" value="1"/>
</dbReference>
<dbReference type="InterPro" id="IPR024791">
    <property type="entry name" value="Cyt_c/ubiquinol_Oxase_su3"/>
</dbReference>
<dbReference type="InterPro" id="IPR033945">
    <property type="entry name" value="Cyt_c_oxase_su3_dom"/>
</dbReference>
<dbReference type="InterPro" id="IPR000298">
    <property type="entry name" value="Cyt_c_oxidase-like_su3"/>
</dbReference>
<dbReference type="InterPro" id="IPR035973">
    <property type="entry name" value="Cyt_c_oxidase_su3-like_sf"/>
</dbReference>
<dbReference type="InterPro" id="IPR013833">
    <property type="entry name" value="Cyt_c_oxidase_su3_a-hlx"/>
</dbReference>
<dbReference type="PANTHER" id="PTHR11403:SF7">
    <property type="entry name" value="CYTOCHROME C OXIDASE SUBUNIT 3"/>
    <property type="match status" value="1"/>
</dbReference>
<dbReference type="PANTHER" id="PTHR11403">
    <property type="entry name" value="CYTOCHROME C OXIDASE SUBUNIT III"/>
    <property type="match status" value="1"/>
</dbReference>
<dbReference type="Pfam" id="PF00510">
    <property type="entry name" value="COX3"/>
    <property type="match status" value="1"/>
</dbReference>
<dbReference type="SUPFAM" id="SSF81452">
    <property type="entry name" value="Cytochrome c oxidase subunit III-like"/>
    <property type="match status" value="1"/>
</dbReference>
<dbReference type="PROSITE" id="PS50253">
    <property type="entry name" value="COX3"/>
    <property type="match status" value="1"/>
</dbReference>
<gene>
    <name type="primary">COX3</name>
</gene>
<reference key="1">
    <citation type="journal article" date="2003" name="FEBS Lett.">
        <title>The complete mitochondrial genome sequence of the pathogenic yeast Candida (Torulopsis) glabrata.</title>
        <authorList>
            <person name="Koszul R."/>
            <person name="Malpertuy A."/>
            <person name="Frangeul L."/>
            <person name="Bouchier C."/>
            <person name="Wincker P."/>
            <person name="Thierry A."/>
            <person name="Duthoy S."/>
            <person name="Ferris S."/>
            <person name="Hennequin C."/>
            <person name="Dujon B."/>
        </authorList>
    </citation>
    <scope>NUCLEOTIDE SEQUENCE [LARGE SCALE GENOMIC DNA]</scope>
    <source>
        <strain>ATCC 2001 / BCRC 20586 / JCM 3761 / NBRC 0622 / NRRL Y-65 / CBS 138</strain>
    </source>
</reference>
<feature type="chain" id="PRO_0000183752" description="Cytochrome c oxidase subunit 3">
    <location>
        <begin position="1"/>
        <end position="269"/>
    </location>
</feature>
<feature type="transmembrane region" description="Helical" evidence="2">
    <location>
        <begin position="21"/>
        <end position="41"/>
    </location>
</feature>
<feature type="transmembrane region" description="Helical" evidence="2">
    <location>
        <begin position="45"/>
        <end position="65"/>
    </location>
</feature>
<feature type="transmembrane region" description="Helical" evidence="2">
    <location>
        <begin position="90"/>
        <end position="110"/>
    </location>
</feature>
<feature type="transmembrane region" description="Helical" evidence="2">
    <location>
        <begin position="138"/>
        <end position="160"/>
    </location>
</feature>
<feature type="transmembrane region" description="Helical" evidence="2">
    <location>
        <begin position="167"/>
        <end position="187"/>
    </location>
</feature>
<feature type="transmembrane region" description="Helical" evidence="2">
    <location>
        <begin position="205"/>
        <end position="225"/>
    </location>
</feature>
<feature type="transmembrane region" description="Helical" evidence="2">
    <location>
        <begin position="247"/>
        <end position="267"/>
    </location>
</feature>
<keyword id="KW-0472">Membrane</keyword>
<keyword id="KW-0496">Mitochondrion</keyword>
<keyword id="KW-0999">Mitochondrion inner membrane</keyword>
<keyword id="KW-1278">Translocase</keyword>
<keyword id="KW-0812">Transmembrane</keyword>
<keyword id="KW-1133">Transmembrane helix</keyword>
<proteinExistence type="inferred from homology"/>
<organism>
    <name type="scientific">Candida glabrata (strain ATCC 2001 / BCRC 20586 / JCM 3761 / NBRC 0622 / NRRL Y-65 / CBS 138)</name>
    <name type="common">Yeast</name>
    <name type="synonym">Nakaseomyces glabratus</name>
    <dbReference type="NCBI Taxonomy" id="284593"/>
    <lineage>
        <taxon>Eukaryota</taxon>
        <taxon>Fungi</taxon>
        <taxon>Dikarya</taxon>
        <taxon>Ascomycota</taxon>
        <taxon>Saccharomycotina</taxon>
        <taxon>Saccharomycetes</taxon>
        <taxon>Saccharomycetales</taxon>
        <taxon>Saccharomycetaceae</taxon>
        <taxon>Nakaseomyces</taxon>
    </lineage>
</organism>
<geneLocation type="mitochondrion"/>
<name>COX3_CANGA</name>